<sequence length="358" mass="40748">MDPLRRSPSPCLSSQPSSPSTPPCEMLGPVGIEAVLDQLKIKAMKMGFEFNIMVVGQSGLGKSTMVNTLFKSKVWKSNPPGLGVPTPQTLQLHSLTHVIEEKGVKLKLTVTDTPGFGDQINNDNCWDPILGYINEQYEQYLQEEILITRQRHIPDTRVHCCVYFVPPTGHCLRPLDIEFLQRLCRTVNVVPVIARADSLTMEEREAFRRRIQQNLRTHCIDVYPQMCFDEDINDKILNSKLRDRIPFAVVGADQEHLVNGRCVLGRKTKWGIIEVENMAHCEFPLLRDLLIRSHLQDLKDITHNIHYENYRVIRLNESHLLPRGPGWVNLAPASPGQLTTPRTFKVCRGAHDDSDDEF</sequence>
<gene>
    <name evidence="16" type="primary">SEPTIN12</name>
    <name type="synonym">SEPT12</name>
</gene>
<name>SEP12_HUMAN</name>
<reference key="1">
    <citation type="journal article" date="2007" name="Cell Motil. Cytoskeleton">
        <title>Sept12 is a component of the mammalian sperm tail annulus.</title>
        <authorList>
            <person name="Steels J.D."/>
            <person name="Estey M.P."/>
            <person name="Froese C.D."/>
            <person name="Reynaud D."/>
            <person name="Pace-Asciak C."/>
            <person name="Trimble W.S."/>
        </authorList>
    </citation>
    <scope>NUCLEOTIDE SEQUENCE [MRNA] (ISOFORM 2)</scope>
    <scope>ALTERNATIVE SPLICING (ISOFORM 1)</scope>
</reference>
<reference key="2">
    <citation type="journal article" date="2007" name="J. Biochem. Mol. Biol.">
        <title>SEPT12 interacts with SEPT6 and this interaction alters the filament structure of SEPT6 in Hela cells.</title>
        <authorList>
            <person name="Ding X."/>
            <person name="Yu W."/>
            <person name="Liu M."/>
            <person name="Shen S."/>
            <person name="Chen F."/>
            <person name="Wan B."/>
            <person name="Yu L."/>
        </authorList>
    </citation>
    <scope>NUCLEOTIDE SEQUENCE [MRNA] (ISOFORM 2)</scope>
    <scope>INTERACTION WITH SEPTIN6 AND SEPTIN11</scope>
    <scope>SUBCELLULAR LOCATION</scope>
    <source>
        <tissue>Testis</tissue>
    </source>
</reference>
<reference key="3">
    <citation type="submission" date="2007-05" db="EMBL/GenBank/DDBJ databases">
        <title>Molecular cloning of septin 12 transcript variant 2 from human testis.</title>
        <authorList>
            <person name="Wang J.R."/>
            <person name="Xing X.W."/>
            <person name="Jiang X.Z."/>
            <person name="Tang Y.X."/>
            <person name="Yang J.F."/>
            <person name="Dai Y.B."/>
            <person name="Tan J."/>
        </authorList>
    </citation>
    <scope>NUCLEOTIDE SEQUENCE [MRNA] (ISOFORM 1)</scope>
</reference>
<reference key="4">
    <citation type="journal article" date="2004" name="Nat. Genet.">
        <title>Complete sequencing and characterization of 21,243 full-length human cDNAs.</title>
        <authorList>
            <person name="Ota T."/>
            <person name="Suzuki Y."/>
            <person name="Nishikawa T."/>
            <person name="Otsuki T."/>
            <person name="Sugiyama T."/>
            <person name="Irie R."/>
            <person name="Wakamatsu A."/>
            <person name="Hayashi K."/>
            <person name="Sato H."/>
            <person name="Nagai K."/>
            <person name="Kimura K."/>
            <person name="Makita H."/>
            <person name="Sekine M."/>
            <person name="Obayashi M."/>
            <person name="Nishi T."/>
            <person name="Shibahara T."/>
            <person name="Tanaka T."/>
            <person name="Ishii S."/>
            <person name="Yamamoto J."/>
            <person name="Saito K."/>
            <person name="Kawai Y."/>
            <person name="Isono Y."/>
            <person name="Nakamura Y."/>
            <person name="Nagahari K."/>
            <person name="Murakami K."/>
            <person name="Yasuda T."/>
            <person name="Iwayanagi T."/>
            <person name="Wagatsuma M."/>
            <person name="Shiratori A."/>
            <person name="Sudo H."/>
            <person name="Hosoiri T."/>
            <person name="Kaku Y."/>
            <person name="Kodaira H."/>
            <person name="Kondo H."/>
            <person name="Sugawara M."/>
            <person name="Takahashi M."/>
            <person name="Kanda K."/>
            <person name="Yokoi T."/>
            <person name="Furuya T."/>
            <person name="Kikkawa E."/>
            <person name="Omura Y."/>
            <person name="Abe K."/>
            <person name="Kamihara K."/>
            <person name="Katsuta N."/>
            <person name="Sato K."/>
            <person name="Tanikawa M."/>
            <person name="Yamazaki M."/>
            <person name="Ninomiya K."/>
            <person name="Ishibashi T."/>
            <person name="Yamashita H."/>
            <person name="Murakawa K."/>
            <person name="Fujimori K."/>
            <person name="Tanai H."/>
            <person name="Kimata M."/>
            <person name="Watanabe M."/>
            <person name="Hiraoka S."/>
            <person name="Chiba Y."/>
            <person name="Ishida S."/>
            <person name="Ono Y."/>
            <person name="Takiguchi S."/>
            <person name="Watanabe S."/>
            <person name="Yosida M."/>
            <person name="Hotuta T."/>
            <person name="Kusano J."/>
            <person name="Kanehori K."/>
            <person name="Takahashi-Fujii A."/>
            <person name="Hara H."/>
            <person name="Tanase T.-O."/>
            <person name="Nomura Y."/>
            <person name="Togiya S."/>
            <person name="Komai F."/>
            <person name="Hara R."/>
            <person name="Takeuchi K."/>
            <person name="Arita M."/>
            <person name="Imose N."/>
            <person name="Musashino K."/>
            <person name="Yuuki H."/>
            <person name="Oshima A."/>
            <person name="Sasaki N."/>
            <person name="Aotsuka S."/>
            <person name="Yoshikawa Y."/>
            <person name="Matsunawa H."/>
            <person name="Ichihara T."/>
            <person name="Shiohata N."/>
            <person name="Sano S."/>
            <person name="Moriya S."/>
            <person name="Momiyama H."/>
            <person name="Satoh N."/>
            <person name="Takami S."/>
            <person name="Terashima Y."/>
            <person name="Suzuki O."/>
            <person name="Nakagawa S."/>
            <person name="Senoh A."/>
            <person name="Mizoguchi H."/>
            <person name="Goto Y."/>
            <person name="Shimizu F."/>
            <person name="Wakebe H."/>
            <person name="Hishigaki H."/>
            <person name="Watanabe T."/>
            <person name="Sugiyama A."/>
            <person name="Takemoto M."/>
            <person name="Kawakami B."/>
            <person name="Yamazaki M."/>
            <person name="Watanabe K."/>
            <person name="Kumagai A."/>
            <person name="Itakura S."/>
            <person name="Fukuzumi Y."/>
            <person name="Fujimori Y."/>
            <person name="Komiyama M."/>
            <person name="Tashiro H."/>
            <person name="Tanigami A."/>
            <person name="Fujiwara T."/>
            <person name="Ono T."/>
            <person name="Yamada K."/>
            <person name="Fujii Y."/>
            <person name="Ozaki K."/>
            <person name="Hirao M."/>
            <person name="Ohmori Y."/>
            <person name="Kawabata A."/>
            <person name="Hikiji T."/>
            <person name="Kobatake N."/>
            <person name="Inagaki H."/>
            <person name="Ikema Y."/>
            <person name="Okamoto S."/>
            <person name="Okitani R."/>
            <person name="Kawakami T."/>
            <person name="Noguchi S."/>
            <person name="Itoh T."/>
            <person name="Shigeta K."/>
            <person name="Senba T."/>
            <person name="Matsumura K."/>
            <person name="Nakajima Y."/>
            <person name="Mizuno T."/>
            <person name="Morinaga M."/>
            <person name="Sasaki M."/>
            <person name="Togashi T."/>
            <person name="Oyama M."/>
            <person name="Hata H."/>
            <person name="Watanabe M."/>
            <person name="Komatsu T."/>
            <person name="Mizushima-Sugano J."/>
            <person name="Satoh T."/>
            <person name="Shirai Y."/>
            <person name="Takahashi Y."/>
            <person name="Nakagawa K."/>
            <person name="Okumura K."/>
            <person name="Nagase T."/>
            <person name="Nomura N."/>
            <person name="Kikuchi H."/>
            <person name="Masuho Y."/>
            <person name="Yamashita R."/>
            <person name="Nakai K."/>
            <person name="Yada T."/>
            <person name="Nakamura Y."/>
            <person name="Ohara O."/>
            <person name="Isogai T."/>
            <person name="Sugano S."/>
        </authorList>
    </citation>
    <scope>NUCLEOTIDE SEQUENCE [LARGE SCALE MRNA] (ISOFORM 1)</scope>
    <source>
        <tissue>Testis</tissue>
    </source>
</reference>
<reference key="5">
    <citation type="submission" date="2005-09" db="EMBL/GenBank/DDBJ databases">
        <authorList>
            <person name="Mural R.J."/>
            <person name="Istrail S."/>
            <person name="Sutton G.G."/>
            <person name="Florea L."/>
            <person name="Halpern A.L."/>
            <person name="Mobarry C.M."/>
            <person name="Lippert R."/>
            <person name="Walenz B."/>
            <person name="Shatkay H."/>
            <person name="Dew I."/>
            <person name="Miller J.R."/>
            <person name="Flanigan M.J."/>
            <person name="Edwards N.J."/>
            <person name="Bolanos R."/>
            <person name="Fasulo D."/>
            <person name="Halldorsson B.V."/>
            <person name="Hannenhalli S."/>
            <person name="Turner R."/>
            <person name="Yooseph S."/>
            <person name="Lu F."/>
            <person name="Nusskern D.R."/>
            <person name="Shue B.C."/>
            <person name="Zheng X.H."/>
            <person name="Zhong F."/>
            <person name="Delcher A.L."/>
            <person name="Huson D.H."/>
            <person name="Kravitz S.A."/>
            <person name="Mouchard L."/>
            <person name="Reinert K."/>
            <person name="Remington K.A."/>
            <person name="Clark A.G."/>
            <person name="Waterman M.S."/>
            <person name="Eichler E.E."/>
            <person name="Adams M.D."/>
            <person name="Hunkapiller M.W."/>
            <person name="Myers E.W."/>
            <person name="Venter J.C."/>
        </authorList>
    </citation>
    <scope>NUCLEOTIDE SEQUENCE [LARGE SCALE GENOMIC DNA]</scope>
</reference>
<reference key="6">
    <citation type="journal article" date="2004" name="Genome Res.">
        <title>The status, quality, and expansion of the NIH full-length cDNA project: the Mammalian Gene Collection (MGC).</title>
        <authorList>
            <consortium name="The MGC Project Team"/>
        </authorList>
    </citation>
    <scope>NUCLEOTIDE SEQUENCE [LARGE SCALE MRNA] (ISOFORM 1)</scope>
    <source>
        <tissue>Brain</tissue>
        <tissue>Testis</tissue>
    </source>
</reference>
<reference key="7">
    <citation type="journal article" date="2005" name="J. Pathol.">
        <title>Expression profiling the human septin gene family.</title>
        <authorList>
            <person name="Hall P.A."/>
            <person name="Jung K."/>
            <person name="Hillan K.J."/>
            <person name="Russell S.E.H."/>
        </authorList>
    </citation>
    <scope>TISSUE SPECIFICITY</scope>
</reference>
<reference key="8">
    <citation type="journal article" date="2007" name="FEBS Lett.">
        <title>Phylogenetic and evolutionary analysis of the septin protein family in metazoan.</title>
        <authorList>
            <person name="Cao L."/>
            <person name="Ding X."/>
            <person name="Yu W."/>
            <person name="Yang X."/>
            <person name="Shen S."/>
            <person name="Yu L."/>
        </authorList>
    </citation>
    <scope>TISSUE SPECIFICITY</scope>
</reference>
<reference key="9">
    <citation type="journal article" date="2008" name="Mol. Cells">
        <title>GTP binding is required for SEPT12 to form filaments and to interact with SEPT11.</title>
        <authorList>
            <person name="Ding X."/>
            <person name="Yu W."/>
            <person name="Liu M."/>
            <person name="Shen S."/>
            <person name="Chen F."/>
            <person name="Cao L."/>
            <person name="Wan B."/>
            <person name="Yu L."/>
        </authorList>
    </citation>
    <scope>HOMODIMERIZATION</scope>
    <scope>INTERACTION WITH SEPTIN11</scope>
    <scope>GTP-BINDING</scope>
    <scope>MUTAGENESIS OF GLY-56</scope>
</reference>
<reference key="10">
    <citation type="journal article" date="2011" name="Fertil. Steril.">
        <title>SEPT12 deficiency causes sperm nucleus damage and developmental arrest of preimplantation embryos.</title>
        <authorList>
            <person name="Lin Y.H."/>
            <person name="Chou C.K."/>
            <person name="Hung Y.C."/>
            <person name="Yu I.S."/>
            <person name="Pan H.A."/>
            <person name="Lin S.W."/>
            <person name="Kuo P.L."/>
        </authorList>
    </citation>
    <scope>SUBCELLULAR LOCATION</scope>
    <scope>DEVELOPMENTAL STAGE</scope>
</reference>
<reference key="11">
    <citation type="journal article" date="2012" name="Hum. Mutat.">
        <title>SEPT12 mutations cause male infertility with defective sperm annulus.</title>
        <authorList>
            <person name="Kuo Y.C."/>
            <person name="Lin Y.H."/>
            <person name="Chen H.I."/>
            <person name="Wang Y.Y."/>
            <person name="Chiou Y.W."/>
            <person name="Lin H.H."/>
            <person name="Pan H.A."/>
            <person name="Wu C.M."/>
            <person name="Su S.M."/>
            <person name="Hsu C.C."/>
            <person name="Kuo P.L."/>
        </authorList>
    </citation>
    <scope>SUBCELLULAR LOCATION</scope>
    <scope>VARIANTS SPGF10 MET-89 AND ASN-197</scope>
    <scope>CHARACTERIZATION OF VARIANTS SPGF10 MET-89 AND ASN-197</scope>
</reference>
<reference key="12">
    <citation type="journal article" date="2013" name="Int. J. Mol. Sci.">
        <title>SEPT12-microtubule complexes are required for sperm head and tail formation.</title>
        <authorList>
            <person name="Kuo P.L."/>
            <person name="Chiang H.S."/>
            <person name="Wang Y.Y."/>
            <person name="Kuo Y.C."/>
            <person name="Chen M.F."/>
            <person name="Yu I.S."/>
            <person name="Teng Y.N."/>
            <person name="Lin S.W."/>
            <person name="Lin Y.H."/>
        </authorList>
    </citation>
    <scope>FUNCTION</scope>
    <scope>SUBUNIT</scope>
</reference>
<reference key="13">
    <citation type="journal article" date="2015" name="J. Cell Sci.">
        <title>SEPT12 orchestrates the formation of mammalian sperm annulus by organizing core octomeric complexes with other SEPT proteins.</title>
        <authorList>
            <person name="Kuo Y.C."/>
            <person name="Shen Y.R."/>
            <person name="Chen H.I."/>
            <person name="Lin Y.H."/>
            <person name="Wang Y.Y."/>
            <person name="Chen Y.R."/>
            <person name="Wang C.Y."/>
            <person name="Kuo P.L."/>
        </authorList>
    </citation>
    <scope>FUNCTION</scope>
    <scope>SUBUNIT</scope>
    <scope>CHARACTERIZATION OF VARIANTS SPGF10 MET-89 AND ASN-197</scope>
</reference>
<reference key="14">
    <citation type="journal article" date="2015" name="PLoS ONE">
        <title>SEPT12/SPAG4/LAMINB1 complexes are required for maintaining the integrity of the nuclear envelope in postmeiotic male germ cells.</title>
        <authorList>
            <person name="Yeh C.H."/>
            <person name="Kuo P.L."/>
            <person name="Wang Y.Y."/>
            <person name="Wu Y.Y."/>
            <person name="Chen M.F."/>
            <person name="Lin D.Y."/>
            <person name="Lai T.H."/>
            <person name="Chiang H.S."/>
            <person name="Lin Y.H."/>
        </authorList>
    </citation>
    <scope>INTERACTION WITH SPAG4 AND LMNB1</scope>
    <scope>SUBCELLULAR LOCATION</scope>
    <scope>CHARACTERIZATION OF VARIANTS SPGF10 MET-89 AND ASN-197</scope>
</reference>
<accession>Q8IYM1</accession>
<accession>Q0P6B0</accession>
<accession>Q1PBH0</accession>
<accession>Q96LL0</accession>
<protein>
    <recommendedName>
        <fullName>Septin-12</fullName>
    </recommendedName>
</protein>
<organism>
    <name type="scientific">Homo sapiens</name>
    <name type="common">Human</name>
    <dbReference type="NCBI Taxonomy" id="9606"/>
    <lineage>
        <taxon>Eukaryota</taxon>
        <taxon>Metazoa</taxon>
        <taxon>Chordata</taxon>
        <taxon>Craniata</taxon>
        <taxon>Vertebrata</taxon>
        <taxon>Euteleostomi</taxon>
        <taxon>Mammalia</taxon>
        <taxon>Eutheria</taxon>
        <taxon>Euarchontoglires</taxon>
        <taxon>Primates</taxon>
        <taxon>Haplorrhini</taxon>
        <taxon>Catarrhini</taxon>
        <taxon>Hominidae</taxon>
        <taxon>Homo</taxon>
    </lineage>
</organism>
<comment type="function">
    <text evidence="1 10 11 15">Filament-forming cytoskeletal GTPase (By similarity). Involved in spermatogenesis. Involved in the morphogenesis of sperm heads and the elongation of sperm tails probably implicating the association with alpha- and beta-tubulins (PubMed:24213608). Forms a filamentous structure with SEPTIN7, SEPTIN6, SEPTIN2 and probably SEPTIN4 at the sperm annulus which is required for the structural integrity and motility of the sperm tail during postmeiotic differentiation (PubMed:25588830). May play a role in cytokinesis (Potential).</text>
</comment>
<comment type="subunit">
    <text evidence="1 6 7 10 11">Septins polymerize into heterooligomeric protein complexes that form filaments, and can associate with cellular membranes, actin filaments and microtubules. GTPase activity is required for filament formation (By similarity). Interacts with SEPTIN6 and SEPTIN11. Self-associates. Component of a septin core octameric complex consisting of SEPTIN12, SEPTIN7, SEPTIN6 and SEPTIN2 or SEPTIN4 in the order 12-7-6-2-2-6-7-12 or 12-7-6-4-4-6-7-12 and located in the sperm annulus; the octamer polymerizes into filaments via the SEPTIN12 N- and C-termini; the SEPTIN12:SEPTIN7 association is mediated by the respective GTP-binding domains (PubMed:25588830). Interacts with SPAG4 and LMNB1 (PubMed:25775403). Associates with alpha- and beta-tubulins (PubMed:24213608).</text>
</comment>
<comment type="interaction">
    <interactant intactId="EBI-2585067">
        <id>Q8IYM1</id>
    </interactant>
    <interactant intactId="EBI-748350">
        <id>Q9UHP6</id>
        <label>RSPH14</label>
    </interactant>
    <organismsDiffer>false</organismsDiffer>
    <experiments>3</experiments>
</comment>
<comment type="interaction">
    <interactant intactId="EBI-2585067">
        <id>Q8IYM1</id>
    </interactant>
    <interactant intactId="EBI-693002">
        <id>Q8WYJ6</id>
        <label>SEPTIN1</label>
    </interactant>
    <organismsDiffer>false</organismsDiffer>
    <experiments>12</experiments>
</comment>
<comment type="interaction">
    <interactant intactId="EBI-2585067">
        <id>Q8IYM1</id>
    </interactant>
    <interactant intactId="EBI-2585067">
        <id>Q8IYM1</id>
        <label>SEPTIN12</label>
    </interactant>
    <organismsDiffer>false</organismsDiffer>
    <experiments>5</experiments>
</comment>
<comment type="interaction">
    <interactant intactId="EBI-2585067">
        <id>Q8IYM1</id>
    </interactant>
    <interactant intactId="EBI-741220">
        <id>Q15019</id>
        <label>SEPTIN2</label>
    </interactant>
    <organismsDiffer>false</organismsDiffer>
    <experiments>9</experiments>
</comment>
<comment type="interaction">
    <interactant intactId="EBI-2585067">
        <id>Q8IYM1</id>
    </interactant>
    <interactant intactId="EBI-1047513">
        <id>O43236</id>
        <label>SEPTIN4</label>
    </interactant>
    <organismsDiffer>false</organismsDiffer>
    <experiments>6</experiments>
</comment>
<comment type="interaction">
    <interactant intactId="EBI-2585067">
        <id>Q8IYM1</id>
    </interactant>
    <interactant intactId="EBI-373345">
        <id>Q99719</id>
        <label>SEPTIN5</label>
    </interactant>
    <organismsDiffer>false</organismsDiffer>
    <experiments>9</experiments>
</comment>
<comment type="interaction">
    <interactant intactId="EBI-2585067">
        <id>Q8IYM1</id>
    </interactant>
    <interactant intactId="EBI-745901">
        <id>Q14141</id>
        <label>SEPTIN6</label>
    </interactant>
    <organismsDiffer>false</organismsDiffer>
    <experiments>16</experiments>
</comment>
<comment type="interaction">
    <interactant intactId="EBI-2585067">
        <id>Q8IYM1</id>
    </interactant>
    <interactant intactId="EBI-2009373">
        <id>Q16181</id>
        <label>SEPTIN7</label>
    </interactant>
    <organismsDiffer>false</organismsDiffer>
    <experiments>19</experiments>
</comment>
<comment type="interaction">
    <interactant intactId="EBI-2585067">
        <id>Q8IYM1</id>
    </interactant>
    <interactant intactId="EBI-10819434">
        <id>Q9NPE6</id>
        <label>SPAG4</label>
    </interactant>
    <organismsDiffer>false</organismsDiffer>
    <experiments>6</experiments>
</comment>
<comment type="subcellular location">
    <subcellularLocation>
        <location>Cytoplasm</location>
    </subcellularLocation>
    <subcellularLocation>
        <location evidence="6">Cytoplasm</location>
        <location evidence="6">Cytoskeleton</location>
    </subcellularLocation>
    <subcellularLocation>
        <location evidence="6">Cytoplasm</location>
        <location evidence="6">Cytoskeleton</location>
        <location evidence="6">Spindle</location>
    </subcellularLocation>
    <subcellularLocation>
        <location evidence="12">Nucleus</location>
    </subcellularLocation>
    <subcellularLocation>
        <location evidence="9">Cell projection</location>
        <location evidence="9">Cilium</location>
        <location evidence="9">Flagellum</location>
    </subcellularLocation>
    <text evidence="6 8 9 12">At interphase, forms a filamentous structure in the cytoplasm. During anaphase, translocates to the central spindle region and to the midbody during cytokinesis. Found in the sperm annulus. Colocalized with SPAG4 at the nuclear periphery in round spermatids, at sperm neck in elongated spermatids and at midpiece regions in ejaculated spermatozoa.</text>
</comment>
<comment type="alternative products">
    <event type="alternative splicing"/>
    <isoform>
        <id>Q8IYM1-1</id>
        <name>1</name>
        <sequence type="displayed"/>
    </isoform>
    <isoform>
        <id>Q8IYM1-2</id>
        <name>2</name>
        <sequence type="described" ref="VSP_029918"/>
    </isoform>
</comment>
<comment type="tissue specificity">
    <text evidence="4 5">Widely expressed. Expressed in lymph node.</text>
</comment>
<comment type="developmental stage">
    <text evidence="8">At the first step of spermiogenesis concentrated around the acrosome. Afterwards expressed between the edge of the acrosome and the perinuclear mantle of the manchette. Next, encircles the upper site of the acrosome and forms the rim of the sperm nucleus. With the formation of mitochondria and mature spermatozoa, localized at the neck and annulus regions.</text>
</comment>
<comment type="disease" evidence="9 11 12">
    <disease id="DI-03528">
        <name>Spermatogenic failure 10</name>
        <acronym>SPGF10</acronym>
        <description>An infertility disorder caused by spermatogenesis defects. It results in decreased sperm motility, concentration, and multiple sperm structural defects. The most prominent feature is a defective sperm annulus, a ring structure that demarcates the midpiece and the principal piece of the sperm tail.</description>
        <dbReference type="MIM" id="614822"/>
    </disease>
    <text>The disease is caused by variants affecting the gene represented in this entry.</text>
</comment>
<comment type="similarity">
    <text evidence="2">Belongs to the TRAFAC class TrmE-Era-EngA-EngB-Septin-like GTPase superfamily. Septin GTPase family.</text>
</comment>
<comment type="sequence caution" evidence="15">
    <conflict type="erroneous initiation">
        <sequence resource="EMBL-CDS" id="AAH24017"/>
    </conflict>
</comment>
<keyword id="KW-0002">3D-structure</keyword>
<keyword id="KW-0025">Alternative splicing</keyword>
<keyword id="KW-0131">Cell cycle</keyword>
<keyword id="KW-0132">Cell division</keyword>
<keyword id="KW-0966">Cell projection</keyword>
<keyword id="KW-0969">Cilium</keyword>
<keyword id="KW-0963">Cytoplasm</keyword>
<keyword id="KW-0206">Cytoskeleton</keyword>
<keyword id="KW-0221">Differentiation</keyword>
<keyword id="KW-0225">Disease variant</keyword>
<keyword id="KW-0282">Flagellum</keyword>
<keyword id="KW-0342">GTP-binding</keyword>
<keyword id="KW-0547">Nucleotide-binding</keyword>
<keyword id="KW-0539">Nucleus</keyword>
<keyword id="KW-1267">Proteomics identification</keyword>
<keyword id="KW-1185">Reference proteome</keyword>
<keyword id="KW-0744">Spermatogenesis</keyword>
<feature type="chain" id="PRO_0000312860" description="Septin-12">
    <location>
        <begin position="1"/>
        <end position="358"/>
    </location>
</feature>
<feature type="domain" description="Septin-type G" evidence="2">
    <location>
        <begin position="46"/>
        <end position="317"/>
    </location>
</feature>
<feature type="region of interest" description="Disordered" evidence="3">
    <location>
        <begin position="1"/>
        <end position="25"/>
    </location>
</feature>
<feature type="region of interest" description="Interaction with SEPTIN7" evidence="11">
    <location>
        <begin position="46"/>
        <end position="319"/>
    </location>
</feature>
<feature type="region of interest" description="G1 motif" evidence="2">
    <location>
        <begin position="56"/>
        <end position="63"/>
    </location>
</feature>
<feature type="region of interest" description="G3 motif" evidence="2">
    <location>
        <begin position="112"/>
        <end position="115"/>
    </location>
</feature>
<feature type="region of interest" description="G4 motif" evidence="2">
    <location>
        <begin position="194"/>
        <end position="197"/>
    </location>
</feature>
<feature type="region of interest" description="Self-association (via N-terminus) to polymerize octameric septin 12-7-6-2/4-2/4-6-7-12 filaments">
    <location>
        <begin position="258"/>
        <end position="358"/>
    </location>
</feature>
<feature type="compositionally biased region" description="Low complexity" evidence="3">
    <location>
        <begin position="6"/>
        <end position="18"/>
    </location>
</feature>
<feature type="binding site" evidence="1">
    <location>
        <begin position="56"/>
        <end position="63"/>
    </location>
    <ligand>
        <name>GTP</name>
        <dbReference type="ChEBI" id="CHEBI:37565"/>
    </ligand>
</feature>
<feature type="binding site" evidence="1">
    <location>
        <position position="89"/>
    </location>
    <ligand>
        <name>GTP</name>
        <dbReference type="ChEBI" id="CHEBI:37565"/>
    </ligand>
</feature>
<feature type="binding site" evidence="1">
    <location>
        <position position="115"/>
    </location>
    <ligand>
        <name>GTP</name>
        <dbReference type="ChEBI" id="CHEBI:37565"/>
    </ligand>
</feature>
<feature type="binding site" evidence="1">
    <location>
        <begin position="195"/>
        <end position="203"/>
    </location>
    <ligand>
        <name>GTP</name>
        <dbReference type="ChEBI" id="CHEBI:37565"/>
    </ligand>
</feature>
<feature type="binding site" evidence="1">
    <location>
        <position position="251"/>
    </location>
    <ligand>
        <name>GTP</name>
        <dbReference type="ChEBI" id="CHEBI:37565"/>
    </ligand>
</feature>
<feature type="binding site" evidence="1">
    <location>
        <position position="266"/>
    </location>
    <ligand>
        <name>GTP</name>
        <dbReference type="ChEBI" id="CHEBI:37565"/>
    </ligand>
</feature>
<feature type="splice variant" id="VSP_029918" description="In isoform 2." evidence="13 14">
    <location>
        <begin position="125"/>
        <end position="170"/>
    </location>
</feature>
<feature type="sequence variant" id="VAR_068097" description="In SPGF10; results in significantly reduced GTP hydrolysis; disrupts interaction with SEPTIN7, SEPTIN6 and SEPTIN2; decreases interaction with SPAG4; dbSNP:rs199696526." evidence="9 11 12">
    <original>T</original>
    <variation>M</variation>
    <location>
        <position position="89"/>
    </location>
</feature>
<feature type="sequence variant" id="VAR_068098" description="In SPGF10; results in significantly reduced GTP hydrolysis due to impaired GTP binding; disrupts interaction with SEPTIN7, SEPTIN6 and SEPTIN2; absence of SEPTIN12, SEPTIN7, SEPTIN6, SEPTIN2 and SEPTIN4 from the sperm annulus; disrupts interaction with LMNB1; dbSNP:rs371195126." evidence="9 11 12">
    <original>D</original>
    <variation>N</variation>
    <location>
        <position position="197"/>
    </location>
</feature>
<feature type="sequence variant" id="VAR_057176" description="In dbSNP:rs6500633.">
    <original>Q</original>
    <variation>R</variation>
    <location>
        <position position="213"/>
    </location>
</feature>
<feature type="mutagenesis site" description="Abolishes binding to GTP and to SEPTIN11, and also abolishes the ability of SEPTIN12 to form filamentous structures." evidence="7">
    <original>G</original>
    <variation>N</variation>
    <location>
        <position position="56"/>
    </location>
</feature>
<feature type="sequence conflict" description="In Ref. 6; AAH24017." evidence="15" ref="6">
    <original>P</original>
    <variation>T</variation>
    <location>
        <position position="22"/>
    </location>
</feature>
<feature type="sequence conflict" description="In Ref. 4; BAB71681." evidence="15" ref="4">
    <original>V</original>
    <variation>M</variation>
    <location>
        <position position="258"/>
    </location>
</feature>
<feature type="sequence conflict" description="In Ref. 6; AAH24017." evidence="15" ref="6">
    <original>H</original>
    <variation>L</variation>
    <location>
        <position position="280"/>
    </location>
</feature>
<feature type="strand" evidence="17">
    <location>
        <begin position="49"/>
        <end position="57"/>
    </location>
</feature>
<feature type="helix" evidence="17">
    <location>
        <begin position="62"/>
        <end position="71"/>
    </location>
</feature>
<feature type="strand" evidence="17">
    <location>
        <begin position="93"/>
        <end position="101"/>
    </location>
</feature>
<feature type="strand" evidence="17">
    <location>
        <begin position="104"/>
        <end position="112"/>
    </location>
</feature>
<feature type="strand" evidence="17">
    <location>
        <begin position="119"/>
        <end position="121"/>
    </location>
</feature>
<feature type="turn" evidence="17">
    <location>
        <begin position="123"/>
        <end position="126"/>
    </location>
</feature>
<feature type="helix" evidence="17">
    <location>
        <begin position="127"/>
        <end position="147"/>
    </location>
</feature>
<feature type="helix" evidence="17">
    <location>
        <begin position="150"/>
        <end position="152"/>
    </location>
</feature>
<feature type="strand" evidence="17">
    <location>
        <begin position="160"/>
        <end position="165"/>
    </location>
</feature>
<feature type="helix" evidence="17">
    <location>
        <begin position="174"/>
        <end position="184"/>
    </location>
</feature>
<feature type="strand" evidence="17">
    <location>
        <begin position="189"/>
        <end position="193"/>
    </location>
</feature>
<feature type="helix" evidence="17">
    <location>
        <begin position="196"/>
        <end position="198"/>
    </location>
</feature>
<feature type="helix" evidence="17">
    <location>
        <begin position="201"/>
        <end position="217"/>
    </location>
</feature>
<feature type="helix" evidence="17">
    <location>
        <begin position="226"/>
        <end position="228"/>
    </location>
</feature>
<feature type="helix" evidence="17">
    <location>
        <begin position="232"/>
        <end position="244"/>
    </location>
</feature>
<feature type="strand" evidence="17">
    <location>
        <begin position="246"/>
        <end position="248"/>
    </location>
</feature>
<feature type="strand" evidence="17">
    <location>
        <begin position="255"/>
        <end position="258"/>
    </location>
</feature>
<feature type="strand" evidence="17">
    <location>
        <begin position="261"/>
        <end position="268"/>
    </location>
</feature>
<feature type="strand" evidence="17">
    <location>
        <begin position="271"/>
        <end position="274"/>
    </location>
</feature>
<feature type="turn" evidence="17">
    <location>
        <begin position="278"/>
        <end position="280"/>
    </location>
</feature>
<feature type="helix" evidence="17">
    <location>
        <begin position="283"/>
        <end position="291"/>
    </location>
</feature>
<feature type="helix" evidence="17">
    <location>
        <begin position="295"/>
        <end position="304"/>
    </location>
</feature>
<feature type="helix" evidence="17">
    <location>
        <begin position="306"/>
        <end position="314"/>
    </location>
</feature>
<evidence type="ECO:0000250" key="1"/>
<evidence type="ECO:0000255" key="2">
    <source>
        <dbReference type="PROSITE-ProRule" id="PRU01056"/>
    </source>
</evidence>
<evidence type="ECO:0000256" key="3">
    <source>
        <dbReference type="SAM" id="MobiDB-lite"/>
    </source>
</evidence>
<evidence type="ECO:0000269" key="4">
    <source>
    </source>
</evidence>
<evidence type="ECO:0000269" key="5">
    <source>
    </source>
</evidence>
<evidence type="ECO:0000269" key="6">
    <source>
    </source>
</evidence>
<evidence type="ECO:0000269" key="7">
    <source>
    </source>
</evidence>
<evidence type="ECO:0000269" key="8">
    <source>
    </source>
</evidence>
<evidence type="ECO:0000269" key="9">
    <source>
    </source>
</evidence>
<evidence type="ECO:0000269" key="10">
    <source>
    </source>
</evidence>
<evidence type="ECO:0000269" key="11">
    <source>
    </source>
</evidence>
<evidence type="ECO:0000269" key="12">
    <source>
    </source>
</evidence>
<evidence type="ECO:0000303" key="13">
    <source>
    </source>
</evidence>
<evidence type="ECO:0000303" key="14">
    <source>
    </source>
</evidence>
<evidence type="ECO:0000305" key="15"/>
<evidence type="ECO:0000312" key="16">
    <source>
        <dbReference type="HGNC" id="HGNC:26348"/>
    </source>
</evidence>
<evidence type="ECO:0007829" key="17">
    <source>
        <dbReference type="PDB" id="6MQ9"/>
    </source>
</evidence>
<proteinExistence type="evidence at protein level"/>
<dbReference type="EMBL" id="DQ456996">
    <property type="protein sequence ID" value="ABE68946.1"/>
    <property type="molecule type" value="mRNA"/>
</dbReference>
<dbReference type="EMBL" id="DQ517531">
    <property type="protein sequence ID" value="ABF61438.1"/>
    <property type="molecule type" value="mRNA"/>
</dbReference>
<dbReference type="EMBL" id="EF620906">
    <property type="protein sequence ID" value="ABR10901.1"/>
    <property type="molecule type" value="mRNA"/>
</dbReference>
<dbReference type="EMBL" id="AK058139">
    <property type="protein sequence ID" value="BAB71681.1"/>
    <property type="molecule type" value="mRNA"/>
</dbReference>
<dbReference type="EMBL" id="CH471112">
    <property type="protein sequence ID" value="EAW85265.1"/>
    <property type="molecule type" value="Genomic_DNA"/>
</dbReference>
<dbReference type="EMBL" id="BC024017">
    <property type="protein sequence ID" value="AAH24017.1"/>
    <property type="status" value="ALT_INIT"/>
    <property type="molecule type" value="mRNA"/>
</dbReference>
<dbReference type="EMBL" id="BC035619">
    <property type="protein sequence ID" value="AAH35619.1"/>
    <property type="molecule type" value="mRNA"/>
</dbReference>
<dbReference type="CCDS" id="CCDS10522.1">
    <molecule id="Q8IYM1-1"/>
</dbReference>
<dbReference type="CCDS" id="CCDS53987.1">
    <molecule id="Q8IYM1-2"/>
</dbReference>
<dbReference type="RefSeq" id="NP_001147930.1">
    <molecule id="Q8IYM1-2"/>
    <property type="nucleotide sequence ID" value="NM_001154458.3"/>
</dbReference>
<dbReference type="RefSeq" id="NP_653206.2">
    <molecule id="Q8IYM1-1"/>
    <property type="nucleotide sequence ID" value="NM_144605.5"/>
</dbReference>
<dbReference type="RefSeq" id="XP_006720909.1">
    <molecule id="Q8IYM1-1"/>
    <property type="nucleotide sequence ID" value="XM_006720846.3"/>
</dbReference>
<dbReference type="RefSeq" id="XP_024305923.1">
    <molecule id="Q8IYM1-1"/>
    <property type="nucleotide sequence ID" value="XM_024450155.2"/>
</dbReference>
<dbReference type="RefSeq" id="XP_054235582.1">
    <molecule id="Q8IYM1-1"/>
    <property type="nucleotide sequence ID" value="XM_054379607.1"/>
</dbReference>
<dbReference type="PDB" id="6MQ9">
    <property type="method" value="X-ray"/>
    <property type="resolution" value="1.86 A"/>
    <property type="chains" value="A/B/C/D=46-320"/>
</dbReference>
<dbReference type="PDB" id="6MQB">
    <property type="method" value="X-ray"/>
    <property type="resolution" value="2.12 A"/>
    <property type="chains" value="A=46-320"/>
</dbReference>
<dbReference type="PDB" id="6MQK">
    <property type="method" value="X-ray"/>
    <property type="resolution" value="2.19 A"/>
    <property type="chains" value="A/B/C/D=46-320"/>
</dbReference>
<dbReference type="PDB" id="6MQL">
    <property type="method" value="X-ray"/>
    <property type="resolution" value="2.17 A"/>
    <property type="chains" value="A=46-320"/>
</dbReference>
<dbReference type="PDBsum" id="6MQ9"/>
<dbReference type="PDBsum" id="6MQB"/>
<dbReference type="PDBsum" id="6MQK"/>
<dbReference type="PDBsum" id="6MQL"/>
<dbReference type="SMR" id="Q8IYM1"/>
<dbReference type="BioGRID" id="125863">
    <property type="interactions" value="27"/>
</dbReference>
<dbReference type="FunCoup" id="Q8IYM1">
    <property type="interactions" value="19"/>
</dbReference>
<dbReference type="IntAct" id="Q8IYM1">
    <property type="interactions" value="29"/>
</dbReference>
<dbReference type="STRING" id="9606.ENSP00000268231"/>
<dbReference type="GlyGen" id="Q8IYM1">
    <property type="glycosylation" value="1 site"/>
</dbReference>
<dbReference type="iPTMnet" id="Q8IYM1"/>
<dbReference type="PhosphoSitePlus" id="Q8IYM1"/>
<dbReference type="BioMuta" id="SEPT12"/>
<dbReference type="DMDM" id="74750767"/>
<dbReference type="jPOST" id="Q8IYM1"/>
<dbReference type="MassIVE" id="Q8IYM1"/>
<dbReference type="PaxDb" id="9606-ENSP00000268231"/>
<dbReference type="PeptideAtlas" id="Q8IYM1"/>
<dbReference type="ProteomicsDB" id="71202">
    <molecule id="Q8IYM1-1"/>
</dbReference>
<dbReference type="ProteomicsDB" id="71203">
    <molecule id="Q8IYM1-2"/>
</dbReference>
<dbReference type="Antibodypedia" id="24423">
    <property type="antibodies" value="141 antibodies from 23 providers"/>
</dbReference>
<dbReference type="DNASU" id="124404"/>
<dbReference type="Ensembl" id="ENST00000268231.13">
    <molecule id="Q8IYM1-1"/>
    <property type="protein sequence ID" value="ENSP00000268231.8"/>
    <property type="gene ID" value="ENSG00000140623.14"/>
</dbReference>
<dbReference type="Ensembl" id="ENST00000396693.9">
    <molecule id="Q8IYM1-2"/>
    <property type="protein sequence ID" value="ENSP00000379922.4"/>
    <property type="gene ID" value="ENSG00000140623.14"/>
</dbReference>
<dbReference type="GeneID" id="124404"/>
<dbReference type="KEGG" id="hsa:124404"/>
<dbReference type="MANE-Select" id="ENST00000268231.13">
    <property type="protein sequence ID" value="ENSP00000268231.8"/>
    <property type="RefSeq nucleotide sequence ID" value="NM_144605.5"/>
    <property type="RefSeq protein sequence ID" value="NP_653206.2"/>
</dbReference>
<dbReference type="UCSC" id="uc002cxq.4">
    <molecule id="Q8IYM1-1"/>
    <property type="organism name" value="human"/>
</dbReference>
<dbReference type="AGR" id="HGNC:26348"/>
<dbReference type="CTD" id="124404"/>
<dbReference type="DisGeNET" id="124404"/>
<dbReference type="GeneCards" id="SEPTIN12"/>
<dbReference type="HGNC" id="HGNC:26348">
    <property type="gene designation" value="SEPTIN12"/>
</dbReference>
<dbReference type="HPA" id="ENSG00000140623">
    <property type="expression patterns" value="Tissue enriched (testis)"/>
</dbReference>
<dbReference type="MalaCards" id="SEPTIN12"/>
<dbReference type="MIM" id="611562">
    <property type="type" value="gene"/>
</dbReference>
<dbReference type="MIM" id="614822">
    <property type="type" value="phenotype"/>
</dbReference>
<dbReference type="neXtProt" id="NX_Q8IYM1"/>
<dbReference type="OpenTargets" id="ENSG00000140623"/>
<dbReference type="Orphanet" id="276234">
    <property type="disease" value="Non-syndromic male infertility due to sperm motility disorder"/>
</dbReference>
<dbReference type="PharmGKB" id="PA162402916"/>
<dbReference type="VEuPathDB" id="HostDB:ENSG00000140623"/>
<dbReference type="eggNOG" id="KOG1547">
    <property type="taxonomic scope" value="Eukaryota"/>
</dbReference>
<dbReference type="GeneTree" id="ENSGT00940000158310"/>
<dbReference type="HOGENOM" id="CLU_017718_7_1_1"/>
<dbReference type="InParanoid" id="Q8IYM1"/>
<dbReference type="OMA" id="QHHIPDT"/>
<dbReference type="OrthoDB" id="416553at2759"/>
<dbReference type="PAN-GO" id="Q8IYM1">
    <property type="GO annotations" value="8 GO annotations based on evolutionary models"/>
</dbReference>
<dbReference type="PhylomeDB" id="Q8IYM1"/>
<dbReference type="TreeFam" id="TF101078"/>
<dbReference type="PathwayCommons" id="Q8IYM1"/>
<dbReference type="SignaLink" id="Q8IYM1"/>
<dbReference type="SIGNOR" id="Q8IYM1"/>
<dbReference type="BioGRID-ORCS" id="124404">
    <property type="hits" value="9 hits in 1076 CRISPR screens"/>
</dbReference>
<dbReference type="CD-CODE" id="8C2F96ED">
    <property type="entry name" value="Centrosome"/>
</dbReference>
<dbReference type="GenomeRNAi" id="124404"/>
<dbReference type="Pharos" id="Q8IYM1">
    <property type="development level" value="Tbio"/>
</dbReference>
<dbReference type="PRO" id="PR:Q8IYM1"/>
<dbReference type="Proteomes" id="UP000005640">
    <property type="component" value="Chromosome 16"/>
</dbReference>
<dbReference type="RNAct" id="Q8IYM1">
    <property type="molecule type" value="protein"/>
</dbReference>
<dbReference type="Bgee" id="ENSG00000140623">
    <property type="expression patterns" value="Expressed in left testis and 81 other cell types or tissues"/>
</dbReference>
<dbReference type="ExpressionAtlas" id="Q8IYM1">
    <property type="expression patterns" value="baseline and differential"/>
</dbReference>
<dbReference type="GO" id="GO:0032153">
    <property type="term" value="C:cell division site"/>
    <property type="evidence" value="ECO:0000318"/>
    <property type="project" value="GO_Central"/>
</dbReference>
<dbReference type="GO" id="GO:0032154">
    <property type="term" value="C:cleavage furrow"/>
    <property type="evidence" value="ECO:0000250"/>
    <property type="project" value="UniProtKB"/>
</dbReference>
<dbReference type="GO" id="GO:0015630">
    <property type="term" value="C:microtubule cytoskeleton"/>
    <property type="evidence" value="ECO:0000314"/>
    <property type="project" value="HPA"/>
</dbReference>
<dbReference type="GO" id="GO:0030496">
    <property type="term" value="C:midbody"/>
    <property type="evidence" value="ECO:0000314"/>
    <property type="project" value="UniProtKB"/>
</dbReference>
<dbReference type="GO" id="GO:0005634">
    <property type="term" value="C:nucleus"/>
    <property type="evidence" value="ECO:0007669"/>
    <property type="project" value="UniProtKB-SubCell"/>
</dbReference>
<dbReference type="GO" id="GO:0048471">
    <property type="term" value="C:perinuclear region of cytoplasm"/>
    <property type="evidence" value="ECO:0000314"/>
    <property type="project" value="UniProtKB"/>
</dbReference>
<dbReference type="GO" id="GO:0031105">
    <property type="term" value="C:septin complex"/>
    <property type="evidence" value="ECO:0000314"/>
    <property type="project" value="UniProtKB"/>
</dbReference>
<dbReference type="GO" id="GO:0005940">
    <property type="term" value="C:septin ring"/>
    <property type="evidence" value="ECO:0000318"/>
    <property type="project" value="GO_Central"/>
</dbReference>
<dbReference type="GO" id="GO:0097227">
    <property type="term" value="C:sperm annulus"/>
    <property type="evidence" value="ECO:0000314"/>
    <property type="project" value="UniProtKB"/>
</dbReference>
<dbReference type="GO" id="GO:0005819">
    <property type="term" value="C:spindle"/>
    <property type="evidence" value="ECO:0000314"/>
    <property type="project" value="UniProtKB"/>
</dbReference>
<dbReference type="GO" id="GO:0001725">
    <property type="term" value="C:stress fiber"/>
    <property type="evidence" value="ECO:0000250"/>
    <property type="project" value="UniProtKB"/>
</dbReference>
<dbReference type="GO" id="GO:0019003">
    <property type="term" value="F:GDP binding"/>
    <property type="evidence" value="ECO:0000250"/>
    <property type="project" value="UniProtKB"/>
</dbReference>
<dbReference type="GO" id="GO:0005525">
    <property type="term" value="F:GTP binding"/>
    <property type="evidence" value="ECO:0000314"/>
    <property type="project" value="UniProtKB"/>
</dbReference>
<dbReference type="GO" id="GO:0003924">
    <property type="term" value="F:GTPase activity"/>
    <property type="evidence" value="ECO:0000318"/>
    <property type="project" value="GO_Central"/>
</dbReference>
<dbReference type="GO" id="GO:0042802">
    <property type="term" value="F:identical protein binding"/>
    <property type="evidence" value="ECO:0000353"/>
    <property type="project" value="IntAct"/>
</dbReference>
<dbReference type="GO" id="GO:0060090">
    <property type="term" value="F:molecular adaptor activity"/>
    <property type="evidence" value="ECO:0000318"/>
    <property type="project" value="GO_Central"/>
</dbReference>
<dbReference type="GO" id="GO:0035091">
    <property type="term" value="F:phosphatidylinositol binding"/>
    <property type="evidence" value="ECO:0000250"/>
    <property type="project" value="UniProtKB"/>
</dbReference>
<dbReference type="GO" id="GO:0042803">
    <property type="term" value="F:protein homodimerization activity"/>
    <property type="evidence" value="ECO:0000353"/>
    <property type="project" value="UniProtKB"/>
</dbReference>
<dbReference type="GO" id="GO:0030154">
    <property type="term" value="P:cell differentiation"/>
    <property type="evidence" value="ECO:0007669"/>
    <property type="project" value="UniProtKB-KW"/>
</dbReference>
<dbReference type="GO" id="GO:0061640">
    <property type="term" value="P:cytoskeleton-dependent cytokinesis"/>
    <property type="evidence" value="ECO:0000318"/>
    <property type="project" value="GO_Central"/>
</dbReference>
<dbReference type="GO" id="GO:0008104">
    <property type="term" value="P:protein localization"/>
    <property type="evidence" value="ECO:0000318"/>
    <property type="project" value="GO_Central"/>
</dbReference>
<dbReference type="GO" id="GO:0007283">
    <property type="term" value="P:spermatogenesis"/>
    <property type="evidence" value="ECO:0007669"/>
    <property type="project" value="UniProtKB-KW"/>
</dbReference>
<dbReference type="CDD" id="cd01850">
    <property type="entry name" value="CDC_Septin"/>
    <property type="match status" value="1"/>
</dbReference>
<dbReference type="FunFam" id="3.40.50.300:FF:000143">
    <property type="entry name" value="septin-9 isoform X1"/>
    <property type="match status" value="1"/>
</dbReference>
<dbReference type="Gene3D" id="3.40.50.300">
    <property type="entry name" value="P-loop containing nucleotide triphosphate hydrolases"/>
    <property type="match status" value="1"/>
</dbReference>
<dbReference type="InterPro" id="IPR030379">
    <property type="entry name" value="G_SEPTIN_dom"/>
</dbReference>
<dbReference type="InterPro" id="IPR027417">
    <property type="entry name" value="P-loop_NTPase"/>
</dbReference>
<dbReference type="InterPro" id="IPR016491">
    <property type="entry name" value="Septin"/>
</dbReference>
<dbReference type="PANTHER" id="PTHR18884">
    <property type="entry name" value="SEPTIN"/>
    <property type="match status" value="1"/>
</dbReference>
<dbReference type="Pfam" id="PF00735">
    <property type="entry name" value="Septin"/>
    <property type="match status" value="1"/>
</dbReference>
<dbReference type="PIRSF" id="PIRSF006698">
    <property type="entry name" value="Septin"/>
    <property type="match status" value="1"/>
</dbReference>
<dbReference type="SUPFAM" id="SSF52540">
    <property type="entry name" value="P-loop containing nucleoside triphosphate hydrolases"/>
    <property type="match status" value="1"/>
</dbReference>
<dbReference type="PROSITE" id="PS51719">
    <property type="entry name" value="G_SEPTIN"/>
    <property type="match status" value="1"/>
</dbReference>